<feature type="chain" id="PRO_0000386676" description="Uncharacterized membrane protein YyzN">
    <location>
        <begin position="1"/>
        <end position="52"/>
    </location>
</feature>
<feature type="transmembrane region" description="Helical" evidence="1">
    <location>
        <begin position="4"/>
        <end position="24"/>
    </location>
</feature>
<feature type="transmembrane region" description="Helical" evidence="1">
    <location>
        <begin position="25"/>
        <end position="45"/>
    </location>
</feature>
<proteinExistence type="predicted"/>
<reference key="1">
    <citation type="journal article" date="1997" name="Nature">
        <title>The complete genome sequence of the Gram-positive bacterium Bacillus subtilis.</title>
        <authorList>
            <person name="Kunst F."/>
            <person name="Ogasawara N."/>
            <person name="Moszer I."/>
            <person name="Albertini A.M."/>
            <person name="Alloni G."/>
            <person name="Azevedo V."/>
            <person name="Bertero M.G."/>
            <person name="Bessieres P."/>
            <person name="Bolotin A."/>
            <person name="Borchert S."/>
            <person name="Borriss R."/>
            <person name="Boursier L."/>
            <person name="Brans A."/>
            <person name="Braun M."/>
            <person name="Brignell S.C."/>
            <person name="Bron S."/>
            <person name="Brouillet S."/>
            <person name="Bruschi C.V."/>
            <person name="Caldwell B."/>
            <person name="Capuano V."/>
            <person name="Carter N.M."/>
            <person name="Choi S.-K."/>
            <person name="Codani J.-J."/>
            <person name="Connerton I.F."/>
            <person name="Cummings N.J."/>
            <person name="Daniel R.A."/>
            <person name="Denizot F."/>
            <person name="Devine K.M."/>
            <person name="Duesterhoeft A."/>
            <person name="Ehrlich S.D."/>
            <person name="Emmerson P.T."/>
            <person name="Entian K.-D."/>
            <person name="Errington J."/>
            <person name="Fabret C."/>
            <person name="Ferrari E."/>
            <person name="Foulger D."/>
            <person name="Fritz C."/>
            <person name="Fujita M."/>
            <person name="Fujita Y."/>
            <person name="Fuma S."/>
            <person name="Galizzi A."/>
            <person name="Galleron N."/>
            <person name="Ghim S.-Y."/>
            <person name="Glaser P."/>
            <person name="Goffeau A."/>
            <person name="Golightly E.J."/>
            <person name="Grandi G."/>
            <person name="Guiseppi G."/>
            <person name="Guy B.J."/>
            <person name="Haga K."/>
            <person name="Haiech J."/>
            <person name="Harwood C.R."/>
            <person name="Henaut A."/>
            <person name="Hilbert H."/>
            <person name="Holsappel S."/>
            <person name="Hosono S."/>
            <person name="Hullo M.-F."/>
            <person name="Itaya M."/>
            <person name="Jones L.-M."/>
            <person name="Joris B."/>
            <person name="Karamata D."/>
            <person name="Kasahara Y."/>
            <person name="Klaerr-Blanchard M."/>
            <person name="Klein C."/>
            <person name="Kobayashi Y."/>
            <person name="Koetter P."/>
            <person name="Koningstein G."/>
            <person name="Krogh S."/>
            <person name="Kumano M."/>
            <person name="Kurita K."/>
            <person name="Lapidus A."/>
            <person name="Lardinois S."/>
            <person name="Lauber J."/>
            <person name="Lazarevic V."/>
            <person name="Lee S.-M."/>
            <person name="Levine A."/>
            <person name="Liu H."/>
            <person name="Masuda S."/>
            <person name="Mauel C."/>
            <person name="Medigue C."/>
            <person name="Medina N."/>
            <person name="Mellado R.P."/>
            <person name="Mizuno M."/>
            <person name="Moestl D."/>
            <person name="Nakai S."/>
            <person name="Noback M."/>
            <person name="Noone D."/>
            <person name="O'Reilly M."/>
            <person name="Ogawa K."/>
            <person name="Ogiwara A."/>
            <person name="Oudega B."/>
            <person name="Park S.-H."/>
            <person name="Parro V."/>
            <person name="Pohl T.M."/>
            <person name="Portetelle D."/>
            <person name="Porwollik S."/>
            <person name="Prescott A.M."/>
            <person name="Presecan E."/>
            <person name="Pujic P."/>
            <person name="Purnelle B."/>
            <person name="Rapoport G."/>
            <person name="Rey M."/>
            <person name="Reynolds S."/>
            <person name="Rieger M."/>
            <person name="Rivolta C."/>
            <person name="Rocha E."/>
            <person name="Roche B."/>
            <person name="Rose M."/>
            <person name="Sadaie Y."/>
            <person name="Sato T."/>
            <person name="Scanlan E."/>
            <person name="Schleich S."/>
            <person name="Schroeter R."/>
            <person name="Scoffone F."/>
            <person name="Sekiguchi J."/>
            <person name="Sekowska A."/>
            <person name="Seror S.J."/>
            <person name="Serror P."/>
            <person name="Shin B.-S."/>
            <person name="Soldo B."/>
            <person name="Sorokin A."/>
            <person name="Tacconi E."/>
            <person name="Takagi T."/>
            <person name="Takahashi H."/>
            <person name="Takemaru K."/>
            <person name="Takeuchi M."/>
            <person name="Tamakoshi A."/>
            <person name="Tanaka T."/>
            <person name="Terpstra P."/>
            <person name="Tognoni A."/>
            <person name="Tosato V."/>
            <person name="Uchiyama S."/>
            <person name="Vandenbol M."/>
            <person name="Vannier F."/>
            <person name="Vassarotti A."/>
            <person name="Viari A."/>
            <person name="Wambutt R."/>
            <person name="Wedler E."/>
            <person name="Wedler H."/>
            <person name="Weitzenegger T."/>
            <person name="Winters P."/>
            <person name="Wipat A."/>
            <person name="Yamamoto H."/>
            <person name="Yamane K."/>
            <person name="Yasumoto K."/>
            <person name="Yata K."/>
            <person name="Yoshida K."/>
            <person name="Yoshikawa H.-F."/>
            <person name="Zumstein E."/>
            <person name="Yoshikawa H."/>
            <person name="Danchin A."/>
        </authorList>
    </citation>
    <scope>NUCLEOTIDE SEQUENCE [LARGE SCALE GENOMIC DNA]</scope>
    <source>
        <strain>168</strain>
    </source>
</reference>
<sequence>MYKIIIPAILAIFALWILLQISLEMSIVKNPMNYFIVFIIFFLFVKMVKEKQ</sequence>
<protein>
    <recommendedName>
        <fullName>Uncharacterized membrane protein YyzN</fullName>
    </recommendedName>
</protein>
<organism>
    <name type="scientific">Bacillus subtilis (strain 168)</name>
    <dbReference type="NCBI Taxonomy" id="224308"/>
    <lineage>
        <taxon>Bacteria</taxon>
        <taxon>Bacillati</taxon>
        <taxon>Bacillota</taxon>
        <taxon>Bacilli</taxon>
        <taxon>Bacillales</taxon>
        <taxon>Bacillaceae</taxon>
        <taxon>Bacillus</taxon>
    </lineage>
</organism>
<comment type="subcellular location">
    <subcellularLocation>
        <location evidence="2">Cell membrane</location>
        <topology evidence="2">Multi-pass membrane protein</topology>
    </subcellularLocation>
</comment>
<accession>C0H3T8</accession>
<name>YYZN_BACSU</name>
<keyword id="KW-1003">Cell membrane</keyword>
<keyword id="KW-0472">Membrane</keyword>
<keyword id="KW-1185">Reference proteome</keyword>
<keyword id="KW-0812">Transmembrane</keyword>
<keyword id="KW-1133">Transmembrane helix</keyword>
<gene>
    <name type="primary">yyzN</name>
    <name type="ordered locus">BSU40139</name>
</gene>
<dbReference type="EMBL" id="AL009126">
    <property type="protein sequence ID" value="CAX52714.1"/>
    <property type="molecule type" value="Genomic_DNA"/>
</dbReference>
<dbReference type="RefSeq" id="WP_009968424.1">
    <property type="nucleotide sequence ID" value="NZ_OZ025638.1"/>
</dbReference>
<dbReference type="RefSeq" id="YP_003097799.1">
    <property type="nucleotide sequence ID" value="NC_000964.3"/>
</dbReference>
<dbReference type="FunCoup" id="C0H3T8">
    <property type="interactions" value="2"/>
</dbReference>
<dbReference type="PaxDb" id="224308-BSU40139"/>
<dbReference type="EnsemblBacteria" id="CAX52714">
    <property type="protein sequence ID" value="CAX52714"/>
    <property type="gene ID" value="BSU_40139"/>
</dbReference>
<dbReference type="GeneID" id="8302916"/>
<dbReference type="KEGG" id="bsu:BSU40139"/>
<dbReference type="PATRIC" id="fig|224308.179.peg.4341"/>
<dbReference type="eggNOG" id="ENOG502ZRKA">
    <property type="taxonomic scope" value="Bacteria"/>
</dbReference>
<dbReference type="InParanoid" id="C0H3T8"/>
<dbReference type="BioCyc" id="BSUB:BSU40139-MONOMER"/>
<dbReference type="Proteomes" id="UP000001570">
    <property type="component" value="Chromosome"/>
</dbReference>
<dbReference type="GO" id="GO:0005886">
    <property type="term" value="C:plasma membrane"/>
    <property type="evidence" value="ECO:0007669"/>
    <property type="project" value="UniProtKB-SubCell"/>
</dbReference>
<evidence type="ECO:0000255" key="1"/>
<evidence type="ECO:0000305" key="2"/>